<reference key="1">
    <citation type="journal article" date="2002" name="Proc. Natl. Acad. Sci. U.S.A.">
        <title>Extensive mosaic structure revealed by the complete genome sequence of uropathogenic Escherichia coli.</title>
        <authorList>
            <person name="Welch R.A."/>
            <person name="Burland V."/>
            <person name="Plunkett G. III"/>
            <person name="Redford P."/>
            <person name="Roesch P."/>
            <person name="Rasko D."/>
            <person name="Buckles E.L."/>
            <person name="Liou S.-R."/>
            <person name="Boutin A."/>
            <person name="Hackett J."/>
            <person name="Stroud D."/>
            <person name="Mayhew G.F."/>
            <person name="Rose D.J."/>
            <person name="Zhou S."/>
            <person name="Schwartz D.C."/>
            <person name="Perna N.T."/>
            <person name="Mobley H.L.T."/>
            <person name="Donnenberg M.S."/>
            <person name="Blattner F.R."/>
        </authorList>
    </citation>
    <scope>NUCLEOTIDE SEQUENCE [LARGE SCALE GENOMIC DNA]</scope>
    <source>
        <strain>CFT073 / ATCC 700928 / UPEC</strain>
    </source>
</reference>
<feature type="chain" id="PRO_0000162712" description="tRNA pseudouridine synthase C">
    <location>
        <begin position="1"/>
        <end position="260"/>
    </location>
</feature>
<feature type="active site" evidence="1">
    <location>
        <position position="54"/>
    </location>
</feature>
<gene>
    <name type="primary">truC</name>
    <name type="ordered locus">c3357</name>
</gene>
<evidence type="ECO:0000250" key="1"/>
<evidence type="ECO:0000305" key="2"/>
<sequence>MLEILYQDEWLVAVNKPSGWLVHRSWLDRDEKVVVMQTVRDQIGQHVFTAHRLDRPTSGVLLMGLSSEAGRLLAQQFEQHQIQKRYHAIVRGWLMEEAVLDYPLAEELDKIADKFAREDKGPQPAVTHYRGLATVEMPVATGRYPTTRYGLVELEPKTGRKHQLRRHLAHLRHPIIGDSKHGDLRQNRSGAEHFGLQRLMLHASQLSLTHPFTGEPLAIHAGLDDTWMQALSQFGWRGLLPENERVEFSAPSGQDGEISS</sequence>
<organism>
    <name type="scientific">Escherichia coli O6:H1 (strain CFT073 / ATCC 700928 / UPEC)</name>
    <dbReference type="NCBI Taxonomy" id="199310"/>
    <lineage>
        <taxon>Bacteria</taxon>
        <taxon>Pseudomonadati</taxon>
        <taxon>Pseudomonadota</taxon>
        <taxon>Gammaproteobacteria</taxon>
        <taxon>Enterobacterales</taxon>
        <taxon>Enterobacteriaceae</taxon>
        <taxon>Escherichia</taxon>
    </lineage>
</organism>
<keyword id="KW-0413">Isomerase</keyword>
<keyword id="KW-1185">Reference proteome</keyword>
<keyword id="KW-0819">tRNA processing</keyword>
<dbReference type="EC" id="5.4.99.26"/>
<dbReference type="EMBL" id="AE014075">
    <property type="protein sequence ID" value="AAN81804.1"/>
    <property type="molecule type" value="Genomic_DNA"/>
</dbReference>
<dbReference type="RefSeq" id="WP_000889992.1">
    <property type="nucleotide sequence ID" value="NC_004431.1"/>
</dbReference>
<dbReference type="SMR" id="Q8FEF9"/>
<dbReference type="STRING" id="199310.c3357"/>
<dbReference type="KEGG" id="ecc:c3357"/>
<dbReference type="eggNOG" id="COG0564">
    <property type="taxonomic scope" value="Bacteria"/>
</dbReference>
<dbReference type="HOGENOM" id="CLU_016902_11_4_6"/>
<dbReference type="BioCyc" id="ECOL199310:C3357-MONOMER"/>
<dbReference type="Proteomes" id="UP000001410">
    <property type="component" value="Chromosome"/>
</dbReference>
<dbReference type="GO" id="GO:0003723">
    <property type="term" value="F:RNA binding"/>
    <property type="evidence" value="ECO:0007669"/>
    <property type="project" value="InterPro"/>
</dbReference>
<dbReference type="GO" id="GO:0160149">
    <property type="term" value="F:tRNA pseudouridine(65) synthase activity"/>
    <property type="evidence" value="ECO:0007669"/>
    <property type="project" value="UniProtKB-EC"/>
</dbReference>
<dbReference type="GO" id="GO:0000455">
    <property type="term" value="P:enzyme-directed rRNA pseudouridine synthesis"/>
    <property type="evidence" value="ECO:0007669"/>
    <property type="project" value="TreeGrafter"/>
</dbReference>
<dbReference type="GO" id="GO:0008033">
    <property type="term" value="P:tRNA processing"/>
    <property type="evidence" value="ECO:0007669"/>
    <property type="project" value="UniProtKB-KW"/>
</dbReference>
<dbReference type="CDD" id="cd02563">
    <property type="entry name" value="PseudoU_synth_TruC"/>
    <property type="match status" value="1"/>
</dbReference>
<dbReference type="FunFam" id="3.30.2350.10:FF:000008">
    <property type="entry name" value="tRNA pseudouridine synthase C"/>
    <property type="match status" value="1"/>
</dbReference>
<dbReference type="Gene3D" id="3.30.2350.10">
    <property type="entry name" value="Pseudouridine synthase"/>
    <property type="match status" value="1"/>
</dbReference>
<dbReference type="InterPro" id="IPR020103">
    <property type="entry name" value="PsdUridine_synth_cat_dom_sf"/>
</dbReference>
<dbReference type="InterPro" id="IPR006224">
    <property type="entry name" value="PsdUridine_synth_RluA-like_CS"/>
</dbReference>
<dbReference type="InterPro" id="IPR006145">
    <property type="entry name" value="PsdUridine_synth_RsuA/RluA"/>
</dbReference>
<dbReference type="InterPro" id="IPR050188">
    <property type="entry name" value="RluA_PseudoU_synthase"/>
</dbReference>
<dbReference type="NCBIfam" id="NF008321">
    <property type="entry name" value="PRK11112.1"/>
    <property type="match status" value="1"/>
</dbReference>
<dbReference type="PANTHER" id="PTHR21600">
    <property type="entry name" value="MITOCHONDRIAL RNA PSEUDOURIDINE SYNTHASE"/>
    <property type="match status" value="1"/>
</dbReference>
<dbReference type="PANTHER" id="PTHR21600:SF56">
    <property type="entry name" value="TRNA PSEUDOURIDINE SYNTHASE C"/>
    <property type="match status" value="1"/>
</dbReference>
<dbReference type="Pfam" id="PF00849">
    <property type="entry name" value="PseudoU_synth_2"/>
    <property type="match status" value="1"/>
</dbReference>
<dbReference type="SUPFAM" id="SSF55120">
    <property type="entry name" value="Pseudouridine synthase"/>
    <property type="match status" value="1"/>
</dbReference>
<dbReference type="PROSITE" id="PS01129">
    <property type="entry name" value="PSI_RLU"/>
    <property type="match status" value="1"/>
</dbReference>
<protein>
    <recommendedName>
        <fullName>tRNA pseudouridine synthase C</fullName>
        <ecNumber>5.4.99.26</ecNumber>
    </recommendedName>
    <alternativeName>
        <fullName>tRNA pseudouridine(65) synthase</fullName>
    </alternativeName>
    <alternativeName>
        <fullName>tRNA pseudouridylate synthase C</fullName>
    </alternativeName>
    <alternativeName>
        <fullName>tRNA-uridine isomerase C</fullName>
    </alternativeName>
</protein>
<name>TRUC_ECOL6</name>
<comment type="function">
    <text evidence="1">Responsible for synthesis of pseudouridine from uracil-65 in transfer RNAs.</text>
</comment>
<comment type="catalytic activity">
    <reaction>
        <text>uridine(65) in tRNA = pseudouridine(65) in tRNA</text>
        <dbReference type="Rhea" id="RHEA:42536"/>
        <dbReference type="Rhea" id="RHEA-COMP:10103"/>
        <dbReference type="Rhea" id="RHEA-COMP:10104"/>
        <dbReference type="ChEBI" id="CHEBI:65314"/>
        <dbReference type="ChEBI" id="CHEBI:65315"/>
        <dbReference type="EC" id="5.4.99.26"/>
    </reaction>
</comment>
<comment type="similarity">
    <text evidence="2">Belongs to the pseudouridine synthase RluA family.</text>
</comment>
<proteinExistence type="inferred from homology"/>
<accession>Q8FEF9</accession>